<accession>Q19V98</accession>
<name>RPOB_CHLAT</name>
<feature type="chain" id="PRO_0000300437" description="DNA-directed RNA polymerase subunit beta">
    <location>
        <begin position="1"/>
        <end position="1088"/>
    </location>
</feature>
<dbReference type="EC" id="2.7.7.6" evidence="1"/>
<dbReference type="EMBL" id="DQ422812">
    <property type="protein sequence ID" value="ABD62240.2"/>
    <property type="molecule type" value="Genomic_DNA"/>
</dbReference>
<dbReference type="RefSeq" id="YP_001019104.1">
    <property type="nucleotide sequence ID" value="NC_008822.1"/>
</dbReference>
<dbReference type="SMR" id="Q19V98"/>
<dbReference type="GeneID" id="4783298"/>
<dbReference type="GO" id="GO:0009507">
    <property type="term" value="C:chloroplast"/>
    <property type="evidence" value="ECO:0007669"/>
    <property type="project" value="UniProtKB-SubCell"/>
</dbReference>
<dbReference type="GO" id="GO:0000428">
    <property type="term" value="C:DNA-directed RNA polymerase complex"/>
    <property type="evidence" value="ECO:0007669"/>
    <property type="project" value="UniProtKB-KW"/>
</dbReference>
<dbReference type="GO" id="GO:0005739">
    <property type="term" value="C:mitochondrion"/>
    <property type="evidence" value="ECO:0007669"/>
    <property type="project" value="GOC"/>
</dbReference>
<dbReference type="GO" id="GO:0003677">
    <property type="term" value="F:DNA binding"/>
    <property type="evidence" value="ECO:0007669"/>
    <property type="project" value="UniProtKB-UniRule"/>
</dbReference>
<dbReference type="GO" id="GO:0003899">
    <property type="term" value="F:DNA-directed RNA polymerase activity"/>
    <property type="evidence" value="ECO:0007669"/>
    <property type="project" value="UniProtKB-UniRule"/>
</dbReference>
<dbReference type="GO" id="GO:0032549">
    <property type="term" value="F:ribonucleoside binding"/>
    <property type="evidence" value="ECO:0007669"/>
    <property type="project" value="InterPro"/>
</dbReference>
<dbReference type="GO" id="GO:0006351">
    <property type="term" value="P:DNA-templated transcription"/>
    <property type="evidence" value="ECO:0007669"/>
    <property type="project" value="UniProtKB-UniRule"/>
</dbReference>
<dbReference type="CDD" id="cd00653">
    <property type="entry name" value="RNA_pol_B_RPB2"/>
    <property type="match status" value="1"/>
</dbReference>
<dbReference type="Gene3D" id="2.40.50.100">
    <property type="match status" value="1"/>
</dbReference>
<dbReference type="Gene3D" id="2.40.50.150">
    <property type="match status" value="1"/>
</dbReference>
<dbReference type="Gene3D" id="3.90.1100.10">
    <property type="match status" value="1"/>
</dbReference>
<dbReference type="Gene3D" id="2.30.150.10">
    <property type="entry name" value="DNA-directed RNA polymerase, beta subunit, external 1 domain"/>
    <property type="match status" value="1"/>
</dbReference>
<dbReference type="Gene3D" id="2.40.270.10">
    <property type="entry name" value="DNA-directed RNA polymerase, subunit 2, domain 6"/>
    <property type="match status" value="2"/>
</dbReference>
<dbReference type="Gene3D" id="3.90.1800.10">
    <property type="entry name" value="RNA polymerase alpha subunit dimerisation domain"/>
    <property type="match status" value="1"/>
</dbReference>
<dbReference type="Gene3D" id="3.90.1110.10">
    <property type="entry name" value="RNA polymerase Rpb2, domain 2"/>
    <property type="match status" value="1"/>
</dbReference>
<dbReference type="HAMAP" id="MF_01321">
    <property type="entry name" value="RNApol_bact_RpoB"/>
    <property type="match status" value="1"/>
</dbReference>
<dbReference type="InterPro" id="IPR042107">
    <property type="entry name" value="DNA-dir_RNA_pol_bsu_ext_1_sf"/>
</dbReference>
<dbReference type="InterPro" id="IPR019462">
    <property type="entry name" value="DNA-dir_RNA_pol_bsu_external_1"/>
</dbReference>
<dbReference type="InterPro" id="IPR015712">
    <property type="entry name" value="DNA-dir_RNA_pol_su2"/>
</dbReference>
<dbReference type="InterPro" id="IPR007120">
    <property type="entry name" value="DNA-dir_RNAP_su2_dom"/>
</dbReference>
<dbReference type="InterPro" id="IPR037033">
    <property type="entry name" value="DNA-dir_RNAP_su2_hyb_sf"/>
</dbReference>
<dbReference type="InterPro" id="IPR010243">
    <property type="entry name" value="RNA_pol_bsu_bac"/>
</dbReference>
<dbReference type="InterPro" id="IPR007121">
    <property type="entry name" value="RNA_pol_bsu_CS"/>
</dbReference>
<dbReference type="InterPro" id="IPR007644">
    <property type="entry name" value="RNA_pol_bsu_protrusion"/>
</dbReference>
<dbReference type="InterPro" id="IPR007642">
    <property type="entry name" value="RNA_pol_Rpb2_2"/>
</dbReference>
<dbReference type="InterPro" id="IPR037034">
    <property type="entry name" value="RNA_pol_Rpb2_2_sf"/>
</dbReference>
<dbReference type="InterPro" id="IPR007645">
    <property type="entry name" value="RNA_pol_Rpb2_3"/>
</dbReference>
<dbReference type="InterPro" id="IPR007641">
    <property type="entry name" value="RNA_pol_Rpb2_7"/>
</dbReference>
<dbReference type="InterPro" id="IPR014724">
    <property type="entry name" value="RNA_pol_RPB2_OB-fold"/>
</dbReference>
<dbReference type="NCBIfam" id="NF001616">
    <property type="entry name" value="PRK00405.1"/>
    <property type="match status" value="1"/>
</dbReference>
<dbReference type="NCBIfam" id="TIGR02013">
    <property type="entry name" value="rpoB"/>
    <property type="match status" value="1"/>
</dbReference>
<dbReference type="PANTHER" id="PTHR20856">
    <property type="entry name" value="DNA-DIRECTED RNA POLYMERASE I SUBUNIT 2"/>
    <property type="match status" value="1"/>
</dbReference>
<dbReference type="Pfam" id="PF04563">
    <property type="entry name" value="RNA_pol_Rpb2_1"/>
    <property type="match status" value="1"/>
</dbReference>
<dbReference type="Pfam" id="PF04561">
    <property type="entry name" value="RNA_pol_Rpb2_2"/>
    <property type="match status" value="1"/>
</dbReference>
<dbReference type="Pfam" id="PF04565">
    <property type="entry name" value="RNA_pol_Rpb2_3"/>
    <property type="match status" value="1"/>
</dbReference>
<dbReference type="Pfam" id="PF10385">
    <property type="entry name" value="RNA_pol_Rpb2_45"/>
    <property type="match status" value="1"/>
</dbReference>
<dbReference type="Pfam" id="PF00562">
    <property type="entry name" value="RNA_pol_Rpb2_6"/>
    <property type="match status" value="1"/>
</dbReference>
<dbReference type="Pfam" id="PF04560">
    <property type="entry name" value="RNA_pol_Rpb2_7"/>
    <property type="match status" value="1"/>
</dbReference>
<dbReference type="SUPFAM" id="SSF64484">
    <property type="entry name" value="beta and beta-prime subunits of DNA dependent RNA-polymerase"/>
    <property type="match status" value="1"/>
</dbReference>
<dbReference type="PROSITE" id="PS01166">
    <property type="entry name" value="RNA_POL_BETA"/>
    <property type="match status" value="1"/>
</dbReference>
<organism>
    <name type="scientific">Chlorokybus atmophyticus</name>
    <name type="common">Soil alga</name>
    <dbReference type="NCBI Taxonomy" id="3144"/>
    <lineage>
        <taxon>Eukaryota</taxon>
        <taxon>Viridiplantae</taxon>
        <taxon>Streptophyta</taxon>
        <taxon>Chlorokybophyceae</taxon>
        <taxon>Chlorokybales</taxon>
        <taxon>Chlorokybaceae</taxon>
        <taxon>Chlorokybus</taxon>
    </lineage>
</organism>
<protein>
    <recommendedName>
        <fullName evidence="1">DNA-directed RNA polymerase subunit beta</fullName>
        <ecNumber evidence="1">2.7.7.6</ecNumber>
    </recommendedName>
    <alternativeName>
        <fullName evidence="1">PEP</fullName>
    </alternativeName>
    <alternativeName>
        <fullName evidence="1">Plastid-encoded RNA polymerase subunit beta</fullName>
        <shortName evidence="1">RNA polymerase subunit beta</shortName>
    </alternativeName>
</protein>
<reference key="1">
    <citation type="journal article" date="2007" name="BMC Biol.">
        <title>A clade uniting the green algae Mesostigma viride and Chlorokybus atmophyticus represents the deepest branch of the Streptophyta in chloroplast genome-based phylogenies.</title>
        <authorList>
            <person name="Lemieux C."/>
            <person name="Otis C."/>
            <person name="Turmel M."/>
        </authorList>
    </citation>
    <scope>NUCLEOTIDE SEQUENCE [LARGE SCALE GENOMIC DNA]</scope>
    <source>
        <strain>SAG 48.80</strain>
    </source>
</reference>
<keyword id="KW-0150">Chloroplast</keyword>
<keyword id="KW-0240">DNA-directed RNA polymerase</keyword>
<keyword id="KW-0548">Nucleotidyltransferase</keyword>
<keyword id="KW-0934">Plastid</keyword>
<keyword id="KW-0804">Transcription</keyword>
<keyword id="KW-0808">Transferase</keyword>
<gene>
    <name evidence="1" type="primary">rpoB</name>
</gene>
<proteinExistence type="inferred from homology"/>
<comment type="function">
    <text evidence="1">DNA-dependent RNA polymerase catalyzes the transcription of DNA into RNA using the four ribonucleoside triphosphates as substrates.</text>
</comment>
<comment type="catalytic activity">
    <reaction evidence="1">
        <text>RNA(n) + a ribonucleoside 5'-triphosphate = RNA(n+1) + diphosphate</text>
        <dbReference type="Rhea" id="RHEA:21248"/>
        <dbReference type="Rhea" id="RHEA-COMP:14527"/>
        <dbReference type="Rhea" id="RHEA-COMP:17342"/>
        <dbReference type="ChEBI" id="CHEBI:33019"/>
        <dbReference type="ChEBI" id="CHEBI:61557"/>
        <dbReference type="ChEBI" id="CHEBI:140395"/>
        <dbReference type="EC" id="2.7.7.6"/>
    </reaction>
</comment>
<comment type="subunit">
    <text evidence="1">In plastids the minimal PEP RNA polymerase catalytic core is composed of four subunits: alpha, beta, beta', and beta''. When a (nuclear-encoded) sigma factor is associated with the core the holoenzyme is formed, which can initiate transcription.</text>
</comment>
<comment type="subcellular location">
    <subcellularLocation>
        <location>Plastid</location>
        <location>Chloroplast</location>
    </subcellularLocation>
</comment>
<comment type="similarity">
    <text evidence="1">Belongs to the RNA polymerase beta chain family.</text>
</comment>
<evidence type="ECO:0000255" key="1">
    <source>
        <dbReference type="HAMAP-Rule" id="MF_01321"/>
    </source>
</evidence>
<geneLocation type="chloroplast"/>
<sequence length="1088" mass="122307">MIQQYNPFKKDAFDILLPDLVGIQLESFSTFLKKGLIEQLRDFSVITDPTNNLELRLLVEQYKLKRPRYNEKKCIRRACTYASQLYIPAQLINKKTGKVQEQDVFLGEMPIMTSRGNFIINGSARVIVNQIVRSPGIYYKREIDPKEGIKTYSASIICNRGAWLRLETDKNGFVWARIGKVRKVSGFILLRAMGLTKSKILNSLRHPEFFQKTIEEGDPYSENDALIDLHSQLYPERPSTLFAARELLKSKFFDPKYYDLGKVGRYKINKKLQLSIPEDIRVLTPQDILTAIDYLINLEFNIGTLDDIDHLKNRRVRSVGELIENQVRVGLSRLERMTYKRMAESHPDALTPASLINPKPLVGVLREFFGSSQLSQFMDQTNPLSEMTHKRRISCLGPGGLSKERAGLAVRDIHPSHYGRICPIETPEGPNAGLIGSLATHARVNPYGFLESPFYPTKNRKVFKKTLPIYLSPDQEDELRVSPGDLLLSSSGKLEGKTVPIRYKQDFSTSRSDQVDYVGISPIQAISIATSLIPFLEHDDANRALMGSNMQRQAVPVIRPERPVVGTGLEAQAALDSGTVIVARHDGIVSLVDSNKIILRSSCGSNQTKVDSVGLNFDYQIDRYHLQKYNRSNQDTCINQRPVVHQGEFIKKGDILADGAATVGGQLTLGKNVLVAYMPWEGYNFEDAILISQRLVYDDIYTSIHIEKYEIEARKTKLGPEKITREVPNLGDYVLRNLDENGIVIPGAWVEAGDILVGKVTPKEDLDQHPEGKLLRAIFSEKARDVRDTSLRVPNGVRGRVVDVRRLKGSELPSGVNMVVHIFISQKRKIQVGDKMAGRHGNKGIISRILPRQDMPYLQDGTPVDMVLNPLGVPSRMNVGQVYECLLGLAGHFLGEEYKLIPFDEMYGKEASRGFVYSKLYEARKKTGYPWLFDIANPGKSQLFDGRTGEPFDQPVTVGRAYMLKLVHLVDDKIHARSTGPYSLVTQQPLGGKAKHGGQRLGEMEVWALEGFGAAYTLQELLTVKSDDMKGRNEAQHAIIKGRPIPKPGTPESFKVLIRELQSLCLDIGIYKIDKTKKGQEIDLMMSM</sequence>